<protein>
    <recommendedName>
        <fullName>Pectate lyase 1</fullName>
        <ecNumber>4.2.2.2</ecNumber>
    </recommendedName>
    <alternativeName>
        <fullName>Major pollen allergen Cup a 1</fullName>
    </alternativeName>
    <allergenName>Cup a 1</allergenName>
</protein>
<dbReference type="EC" id="4.2.2.2"/>
<dbReference type="EMBL" id="AJ278498">
    <property type="protein sequence ID" value="CAC37790.2"/>
    <property type="molecule type" value="mRNA"/>
</dbReference>
<dbReference type="EMBL" id="EF079863">
    <property type="protein sequence ID" value="ABK78766.1"/>
    <property type="molecule type" value="mRNA"/>
</dbReference>
<dbReference type="EMBL" id="AJ243570">
    <property type="protein sequence ID" value="CAB62551.1"/>
    <property type="molecule type" value="mRNA"/>
</dbReference>
<dbReference type="SMR" id="Q9SCG9"/>
<dbReference type="Allergome" id="256">
    <property type="allergen name" value="Cup a 1"/>
</dbReference>
<dbReference type="Allergome" id="3232">
    <property type="allergen name" value="Cup a 1.0101"/>
</dbReference>
<dbReference type="Allergome" id="895">
    <property type="allergen name" value="Cup a 1.02"/>
</dbReference>
<dbReference type="CAZy" id="PL1">
    <property type="family name" value="Polysaccharide Lyase Family 1"/>
</dbReference>
<dbReference type="UniPathway" id="UPA00545">
    <property type="reaction ID" value="UER00824"/>
</dbReference>
<dbReference type="GO" id="GO:0046872">
    <property type="term" value="F:metal ion binding"/>
    <property type="evidence" value="ECO:0007669"/>
    <property type="project" value="UniProtKB-KW"/>
</dbReference>
<dbReference type="GO" id="GO:0030570">
    <property type="term" value="F:pectate lyase activity"/>
    <property type="evidence" value="ECO:0007669"/>
    <property type="project" value="UniProtKB-EC"/>
</dbReference>
<dbReference type="GO" id="GO:0045490">
    <property type="term" value="P:pectin catabolic process"/>
    <property type="evidence" value="ECO:0007669"/>
    <property type="project" value="UniProtKB-UniPathway"/>
</dbReference>
<dbReference type="Gene3D" id="2.160.20.10">
    <property type="entry name" value="Single-stranded right-handed beta-helix, Pectin lyase-like"/>
    <property type="match status" value="1"/>
</dbReference>
<dbReference type="InterPro" id="IPR018082">
    <property type="entry name" value="AmbAllergen"/>
</dbReference>
<dbReference type="InterPro" id="IPR002022">
    <property type="entry name" value="Pec_lyase"/>
</dbReference>
<dbReference type="InterPro" id="IPR012334">
    <property type="entry name" value="Pectin_lyas_fold"/>
</dbReference>
<dbReference type="InterPro" id="IPR011050">
    <property type="entry name" value="Pectin_lyase_fold/virulence"/>
</dbReference>
<dbReference type="InterPro" id="IPR045032">
    <property type="entry name" value="PEL"/>
</dbReference>
<dbReference type="PANTHER" id="PTHR31683:SF80">
    <property type="entry name" value="PECTATE LYASE 16-RELATED"/>
    <property type="match status" value="1"/>
</dbReference>
<dbReference type="PANTHER" id="PTHR31683">
    <property type="entry name" value="PECTATE LYASE 18-RELATED"/>
    <property type="match status" value="1"/>
</dbReference>
<dbReference type="Pfam" id="PF00544">
    <property type="entry name" value="Pectate_lyase_4"/>
    <property type="match status" value="1"/>
</dbReference>
<dbReference type="PRINTS" id="PR00807">
    <property type="entry name" value="AMBALLERGEN"/>
</dbReference>
<dbReference type="SMART" id="SM00656">
    <property type="entry name" value="Amb_all"/>
    <property type="match status" value="1"/>
</dbReference>
<dbReference type="SUPFAM" id="SSF51126">
    <property type="entry name" value="Pectin lyase-like"/>
    <property type="match status" value="1"/>
</dbReference>
<evidence type="ECO:0000250" key="1"/>
<evidence type="ECO:0000255" key="2"/>
<evidence type="ECO:0000269" key="3">
    <source>
    </source>
</evidence>
<evidence type="ECO:0000305" key="4"/>
<keyword id="KW-0020">Allergen</keyword>
<keyword id="KW-0106">Calcium</keyword>
<keyword id="KW-1015">Disulfide bond</keyword>
<keyword id="KW-0325">Glycoprotein</keyword>
<keyword id="KW-0456">Lyase</keyword>
<keyword id="KW-0479">Metal-binding</keyword>
<keyword id="KW-0732">Signal</keyword>
<name>PLY1_HESAR</name>
<feature type="signal peptide" evidence="2">
    <location>
        <begin position="1"/>
        <end position="21"/>
    </location>
</feature>
<feature type="chain" id="PRO_0000212997" description="Pectate lyase 1">
    <location>
        <begin position="22"/>
        <end position="367"/>
    </location>
</feature>
<feature type="active site" evidence="2">
    <location>
        <position position="250"/>
    </location>
</feature>
<feature type="binding site" evidence="1">
    <location>
        <position position="170"/>
    </location>
    <ligand>
        <name>Ca(2+)</name>
        <dbReference type="ChEBI" id="CHEBI:29108"/>
    </ligand>
</feature>
<feature type="binding site" evidence="1">
    <location>
        <position position="194"/>
    </location>
    <ligand>
        <name>Ca(2+)</name>
        <dbReference type="ChEBI" id="CHEBI:29108"/>
    </ligand>
</feature>
<feature type="binding site" evidence="1">
    <location>
        <position position="198"/>
    </location>
    <ligand>
        <name>Ca(2+)</name>
        <dbReference type="ChEBI" id="CHEBI:29108"/>
    </ligand>
</feature>
<feature type="glycosylation site" description="N-linked (GlcNAc...) asparagine" evidence="2">
    <location>
        <position position="148"/>
    </location>
</feature>
<feature type="glycosylation site" description="N-linked (GlcNAc...) asparagine" evidence="2">
    <location>
        <position position="178"/>
    </location>
</feature>
<feature type="glycosylation site" description="N-linked (GlcNAc...) asparagine" evidence="2">
    <location>
        <position position="293"/>
    </location>
</feature>
<feature type="disulfide bond" evidence="1">
    <location>
        <begin position="28"/>
        <end position="45"/>
    </location>
</feature>
<feature type="disulfide bond" evidence="1">
    <location>
        <begin position="128"/>
        <end position="147"/>
    </location>
</feature>
<feature type="disulfide bond" evidence="1">
    <location>
        <begin position="306"/>
        <end position="312"/>
    </location>
</feature>
<feature type="sequence conflict" description="In Ref. 1; CAC37790." evidence="4" ref="1">
    <original>S</original>
    <variation>L</variation>
    <location>
        <position position="52"/>
    </location>
</feature>
<feature type="sequence conflict" description="In Ref. 1; CAC37790." evidence="4" ref="1">
    <original>E</original>
    <variation>D</variation>
    <location>
        <position position="68"/>
    </location>
</feature>
<feature type="sequence conflict" description="In Ref. 2; ABK78766." evidence="4" ref="2">
    <original>A</original>
    <variation>N</variation>
    <location>
        <position position="108"/>
    </location>
</feature>
<feature type="sequence conflict" description="In Ref. 3; CAB62551." evidence="4" ref="3">
    <original>D</original>
    <variation>V</variation>
    <location>
        <position position="119"/>
    </location>
</feature>
<feature type="sequence conflict" description="In Ref. 1; CAC37790." evidence="4" ref="1">
    <original>K</original>
    <variation>T</variation>
    <location>
        <position position="133"/>
    </location>
</feature>
<feature type="sequence conflict" description="In Ref. 1; CAC37790." evidence="4" ref="1">
    <original>K</original>
    <variation>I</variation>
    <location>
        <position position="232"/>
    </location>
</feature>
<feature type="sequence conflict" description="In Ref. 1; CAC37790." evidence="4" ref="1">
    <original>N</original>
    <variation>S</variation>
    <location>
        <position position="293"/>
    </location>
</feature>
<feature type="sequence conflict" description="In Ref. 1; CAC37790." evidence="4" ref="1">
    <original>T</original>
    <variation>S</variation>
    <location>
        <position position="308"/>
    </location>
</feature>
<feature type="sequence conflict" description="In Ref. 1; CAC37790." evidence="4" ref="1">
    <original>S</original>
    <variation>F</variation>
    <location>
        <position position="319"/>
    </location>
</feature>
<feature type="sequence conflict" description="In Ref. 1; CAC37790." evidence="4" ref="1">
    <original>D</original>
    <variation>E</variation>
    <location>
        <position position="338"/>
    </location>
</feature>
<feature type="sequence conflict" description="In Ref. 1; CAC37790." evidence="4" ref="1">
    <original>A</original>
    <variation>T</variation>
    <location>
        <position position="367"/>
    </location>
</feature>
<accession>Q9SCG9</accession>
<accession>A0T2M2</accession>
<accession>Q93XL6</accession>
<proteinExistence type="evidence at protein level"/>
<reference key="1">
    <citation type="submission" date="2002-02" db="EMBL/GenBank/DDBJ databases">
        <title>Cloning of Cupressus Arizonica major allergen.</title>
        <authorList>
            <person name="Butteroni C."/>
            <person name="Di Felice G."/>
            <person name="Pini C."/>
        </authorList>
    </citation>
    <scope>NUCLEOTIDE SEQUENCE [MRNA]</scope>
    <source>
        <tissue>Pollen</tissue>
    </source>
</reference>
<reference key="2">
    <citation type="journal article" date="2010" name="Mol. Biotechnol.">
        <title>A modified protocol for RNA isolation from high polysaccharide containing Cupressus arizonica pollen. Applications for RT-PCR and phage display library construction.</title>
        <authorList>
            <person name="Pico de Coana Y."/>
            <person name="Parody N."/>
            <person name="Fernandez-Caldas E."/>
            <person name="Alonso C."/>
        </authorList>
    </citation>
    <scope>NUCLEOTIDE SEQUENCE [MRNA] OF 21-367</scope>
    <source>
        <tissue>Pollen</tissue>
    </source>
</reference>
<reference key="3">
    <citation type="journal article" date="2000" name="Clin. Exp. Allergy">
        <title>Molecular cloning of major allergen from Cupressus arizonica pollen: Cup a 1.</title>
        <authorList>
            <person name="Aceituno E."/>
            <person name="Del Pozo V."/>
            <person name="Minguez A."/>
            <person name="Arrieta I."/>
            <person name="Cortegano I."/>
            <person name="Cardaba B."/>
            <person name="Gallardo S."/>
            <person name="Rojo M."/>
            <person name="Palomino P."/>
            <person name="Lahoz C."/>
        </authorList>
    </citation>
    <scope>NUCLEOTIDE SEQUENCE [MRNA] OF 22-367</scope>
    <scope>ALLERGEN</scope>
</reference>
<organism>
    <name type="scientific">Hesperocyparis arizonica</name>
    <name type="common">Arizona cypress</name>
    <name type="synonym">Cupressus arizonica</name>
    <dbReference type="NCBI Taxonomy" id="49011"/>
    <lineage>
        <taxon>Eukaryota</taxon>
        <taxon>Viridiplantae</taxon>
        <taxon>Streptophyta</taxon>
        <taxon>Embryophyta</taxon>
        <taxon>Tracheophyta</taxon>
        <taxon>Spermatophyta</taxon>
        <taxon>Pinopsida</taxon>
        <taxon>Pinidae</taxon>
        <taxon>Conifers II</taxon>
        <taxon>Cupressales</taxon>
        <taxon>Cupressaceae</taxon>
        <taxon>Hesperocyparis</taxon>
    </lineage>
</organism>
<comment type="function">
    <text evidence="1">Has pectate lyase activity.</text>
</comment>
<comment type="catalytic activity">
    <reaction>
        <text>Eliminative cleavage of (1-&gt;4)-alpha-D-galacturonan to give oligosaccharides with 4-deoxy-alpha-D-galact-4-enuronosyl groups at their non-reducing ends.</text>
        <dbReference type="EC" id="4.2.2.2"/>
    </reaction>
</comment>
<comment type="cofactor">
    <cofactor evidence="1">
        <name>Ca(2+)</name>
        <dbReference type="ChEBI" id="CHEBI:29108"/>
    </cofactor>
    <text evidence="1">Binds 1 Ca(2+) ion.</text>
</comment>
<comment type="pathway">
    <text>Glycan metabolism; pectin degradation; 2-dehydro-3-deoxy-D-gluconate from pectin: step 2/5.</text>
</comment>
<comment type="allergen">
    <text evidence="3">Causes an allergic reaction in human.</text>
</comment>
<comment type="similarity">
    <text evidence="4">Belongs to the polysaccharide lyase 1 family. Amb a subfamily.</text>
</comment>
<sequence length="367" mass="39776">MASPCLVAVLVFLCAIVSCYSDNPIDSCWRGDSNWDQNRMKLADCVVGFGSSTMGGKGGEIYTVTSSEDNPVNPTPGTLRYGATREKALWIIFSQNMNIKLQMPLYVAGYKTIDGRGADVHLGNGGPCLFMRKASHVILHGLHIHGCNTSVLGDVLVSESIGVEPVHAQDGDAITMRNVTNAWIDHNSLSDCSDGLIDVTLGSTGITISNNHFFNHHKVMLLGHDDTYDDDKSMKVTVAFNQFGPNAGQRMPRARYGLVHVANNNYDQWNIYAIGGSSNPTILSEGNSFTAPNESYKKEVTKRIGCETTSACANWVWRSTRDAFTNGAYFVSSGKAEDTNIYNSNEAFKVENGNAAPQLTQNAGVVA</sequence>